<evidence type="ECO:0000255" key="1">
    <source>
        <dbReference type="HAMAP-Rule" id="MF_00208"/>
    </source>
</evidence>
<accession>Q9PF85</accession>
<feature type="chain" id="PRO_0000101975" description="UDP-N-acetylmuramoyl-L-alanyl-D-glutamate--2,6-diaminopimelate ligase">
    <location>
        <begin position="1"/>
        <end position="495"/>
    </location>
</feature>
<feature type="short sequence motif" description="Meso-diaminopimelate recognition motif">
    <location>
        <begin position="408"/>
        <end position="411"/>
    </location>
</feature>
<feature type="binding site" evidence="1">
    <location>
        <position position="29"/>
    </location>
    <ligand>
        <name>UDP-N-acetyl-alpha-D-muramoyl-L-alanyl-D-glutamate</name>
        <dbReference type="ChEBI" id="CHEBI:83900"/>
    </ligand>
</feature>
<feature type="binding site" evidence="1">
    <location>
        <begin position="111"/>
        <end position="117"/>
    </location>
    <ligand>
        <name>ATP</name>
        <dbReference type="ChEBI" id="CHEBI:30616"/>
    </ligand>
</feature>
<feature type="binding site" evidence="1">
    <location>
        <begin position="153"/>
        <end position="154"/>
    </location>
    <ligand>
        <name>UDP-N-acetyl-alpha-D-muramoyl-L-alanyl-D-glutamate</name>
        <dbReference type="ChEBI" id="CHEBI:83900"/>
    </ligand>
</feature>
<feature type="binding site" evidence="1">
    <location>
        <position position="180"/>
    </location>
    <ligand>
        <name>UDP-N-acetyl-alpha-D-muramoyl-L-alanyl-D-glutamate</name>
        <dbReference type="ChEBI" id="CHEBI:83900"/>
    </ligand>
</feature>
<feature type="binding site" evidence="1">
    <location>
        <position position="186"/>
    </location>
    <ligand>
        <name>UDP-N-acetyl-alpha-D-muramoyl-L-alanyl-D-glutamate</name>
        <dbReference type="ChEBI" id="CHEBI:83900"/>
    </ligand>
</feature>
<feature type="binding site" evidence="1">
    <location>
        <position position="188"/>
    </location>
    <ligand>
        <name>UDP-N-acetyl-alpha-D-muramoyl-L-alanyl-D-glutamate</name>
        <dbReference type="ChEBI" id="CHEBI:83900"/>
    </ligand>
</feature>
<feature type="binding site" evidence="1">
    <location>
        <position position="384"/>
    </location>
    <ligand>
        <name>meso-2,6-diaminopimelate</name>
        <dbReference type="ChEBI" id="CHEBI:57791"/>
    </ligand>
</feature>
<feature type="binding site" evidence="1">
    <location>
        <begin position="408"/>
        <end position="411"/>
    </location>
    <ligand>
        <name>meso-2,6-diaminopimelate</name>
        <dbReference type="ChEBI" id="CHEBI:57791"/>
    </ligand>
</feature>
<feature type="binding site" evidence="1">
    <location>
        <position position="459"/>
    </location>
    <ligand>
        <name>meso-2,6-diaminopimelate</name>
        <dbReference type="ChEBI" id="CHEBI:57791"/>
    </ligand>
</feature>
<feature type="binding site" evidence="1">
    <location>
        <position position="463"/>
    </location>
    <ligand>
        <name>meso-2,6-diaminopimelate</name>
        <dbReference type="ChEBI" id="CHEBI:57791"/>
    </ligand>
</feature>
<feature type="modified residue" description="N6-carboxylysine" evidence="1">
    <location>
        <position position="220"/>
    </location>
</feature>
<sequence>MRRSMPLAQLLPDIPQARDVVISGLVMDSREVQPGDAFVAVAGFGAHGLCFIEDACARGAVAILFEPPAPQGVSVPDGAIAVHGLRARLGAMADRFHGHPSQAMTMVGVTGTNGKTSTVQLLAQAWHCLGVRSATCGTLGVGLYDQVVPTGFTTPLVLQLHQCLAQLRDEGAQAVAMEVSSHALDQGRVDGVHYDVVVFTNLTRDHLDYHGDMEHYGAAKARLFAHQDVQAAVINVDDPFGLRLLHGLAKGMRRVGVSVCGHTDADVMAQHLSLNLQGIGFDLVIGADHASVRSPLMGRFNVDNLLAVAGVLYALNYALSEIAAVLSTLRPIHGRMNRLGGQDGQPVVVVDYAHTPDALGQVLSSLSSHVCGRLICVFGCGGERDRGKRSQMAVIAESNADVVFVTDDNPRGEDGDGIVADILAGFARPNVVKVQRDRSAAIAAAIGIASAEDVVLIAGKGHERYQEVAGVRHPFDDTEVARRVLAAMSAQETVR</sequence>
<dbReference type="EC" id="6.3.2.13" evidence="1"/>
<dbReference type="EMBL" id="AE003849">
    <property type="protein sequence ID" value="AAF83603.1"/>
    <property type="molecule type" value="Genomic_DNA"/>
</dbReference>
<dbReference type="PIR" id="H82762">
    <property type="entry name" value="H82762"/>
</dbReference>
<dbReference type="RefSeq" id="WP_010893314.1">
    <property type="nucleotide sequence ID" value="NC_002488.3"/>
</dbReference>
<dbReference type="SMR" id="Q9PF85"/>
<dbReference type="STRING" id="160492.XF_0793"/>
<dbReference type="KEGG" id="xfa:XF_0793"/>
<dbReference type="eggNOG" id="COG0769">
    <property type="taxonomic scope" value="Bacteria"/>
</dbReference>
<dbReference type="HOGENOM" id="CLU_022291_3_2_6"/>
<dbReference type="UniPathway" id="UPA00219"/>
<dbReference type="Proteomes" id="UP000000812">
    <property type="component" value="Chromosome"/>
</dbReference>
<dbReference type="GO" id="GO:0005737">
    <property type="term" value="C:cytoplasm"/>
    <property type="evidence" value="ECO:0007669"/>
    <property type="project" value="UniProtKB-SubCell"/>
</dbReference>
<dbReference type="GO" id="GO:0005524">
    <property type="term" value="F:ATP binding"/>
    <property type="evidence" value="ECO:0007669"/>
    <property type="project" value="UniProtKB-UniRule"/>
</dbReference>
<dbReference type="GO" id="GO:0000287">
    <property type="term" value="F:magnesium ion binding"/>
    <property type="evidence" value="ECO:0007669"/>
    <property type="project" value="UniProtKB-UniRule"/>
</dbReference>
<dbReference type="GO" id="GO:0008765">
    <property type="term" value="F:UDP-N-acetylmuramoylalanyl-D-glutamate-2,6-diaminopimelate ligase activity"/>
    <property type="evidence" value="ECO:0007669"/>
    <property type="project" value="UniProtKB-UniRule"/>
</dbReference>
<dbReference type="GO" id="GO:0051301">
    <property type="term" value="P:cell division"/>
    <property type="evidence" value="ECO:0007669"/>
    <property type="project" value="UniProtKB-KW"/>
</dbReference>
<dbReference type="GO" id="GO:0071555">
    <property type="term" value="P:cell wall organization"/>
    <property type="evidence" value="ECO:0007669"/>
    <property type="project" value="UniProtKB-KW"/>
</dbReference>
<dbReference type="GO" id="GO:0009252">
    <property type="term" value="P:peptidoglycan biosynthetic process"/>
    <property type="evidence" value="ECO:0007669"/>
    <property type="project" value="UniProtKB-UniRule"/>
</dbReference>
<dbReference type="GO" id="GO:0008360">
    <property type="term" value="P:regulation of cell shape"/>
    <property type="evidence" value="ECO:0007669"/>
    <property type="project" value="UniProtKB-KW"/>
</dbReference>
<dbReference type="Gene3D" id="3.90.190.20">
    <property type="entry name" value="Mur ligase, C-terminal domain"/>
    <property type="match status" value="1"/>
</dbReference>
<dbReference type="Gene3D" id="3.40.1190.10">
    <property type="entry name" value="Mur-like, catalytic domain"/>
    <property type="match status" value="1"/>
</dbReference>
<dbReference type="Gene3D" id="3.40.1390.10">
    <property type="entry name" value="MurE/MurF, N-terminal domain"/>
    <property type="match status" value="1"/>
</dbReference>
<dbReference type="HAMAP" id="MF_00208">
    <property type="entry name" value="MurE"/>
    <property type="match status" value="1"/>
</dbReference>
<dbReference type="InterPro" id="IPR036565">
    <property type="entry name" value="Mur-like_cat_sf"/>
</dbReference>
<dbReference type="InterPro" id="IPR004101">
    <property type="entry name" value="Mur_ligase_C"/>
</dbReference>
<dbReference type="InterPro" id="IPR036615">
    <property type="entry name" value="Mur_ligase_C_dom_sf"/>
</dbReference>
<dbReference type="InterPro" id="IPR013221">
    <property type="entry name" value="Mur_ligase_cen"/>
</dbReference>
<dbReference type="InterPro" id="IPR000713">
    <property type="entry name" value="Mur_ligase_N"/>
</dbReference>
<dbReference type="InterPro" id="IPR035911">
    <property type="entry name" value="MurE/MurF_N"/>
</dbReference>
<dbReference type="InterPro" id="IPR005761">
    <property type="entry name" value="UDP-N-AcMur-Glu-dNH2Pim_ligase"/>
</dbReference>
<dbReference type="NCBIfam" id="TIGR01085">
    <property type="entry name" value="murE"/>
    <property type="match status" value="1"/>
</dbReference>
<dbReference type="NCBIfam" id="NF001124">
    <property type="entry name" value="PRK00139.1-2"/>
    <property type="match status" value="1"/>
</dbReference>
<dbReference type="NCBIfam" id="NF001126">
    <property type="entry name" value="PRK00139.1-4"/>
    <property type="match status" value="1"/>
</dbReference>
<dbReference type="PANTHER" id="PTHR23135">
    <property type="entry name" value="MUR LIGASE FAMILY MEMBER"/>
    <property type="match status" value="1"/>
</dbReference>
<dbReference type="PANTHER" id="PTHR23135:SF4">
    <property type="entry name" value="UDP-N-ACETYLMURAMOYL-L-ALANYL-D-GLUTAMATE--2,6-DIAMINOPIMELATE LIGASE MURE HOMOLOG, CHLOROPLASTIC"/>
    <property type="match status" value="1"/>
</dbReference>
<dbReference type="Pfam" id="PF01225">
    <property type="entry name" value="Mur_ligase"/>
    <property type="match status" value="1"/>
</dbReference>
<dbReference type="Pfam" id="PF02875">
    <property type="entry name" value="Mur_ligase_C"/>
    <property type="match status" value="1"/>
</dbReference>
<dbReference type="Pfam" id="PF08245">
    <property type="entry name" value="Mur_ligase_M"/>
    <property type="match status" value="1"/>
</dbReference>
<dbReference type="SUPFAM" id="SSF53623">
    <property type="entry name" value="MurD-like peptide ligases, catalytic domain"/>
    <property type="match status" value="1"/>
</dbReference>
<dbReference type="SUPFAM" id="SSF53244">
    <property type="entry name" value="MurD-like peptide ligases, peptide-binding domain"/>
    <property type="match status" value="1"/>
</dbReference>
<dbReference type="SUPFAM" id="SSF63418">
    <property type="entry name" value="MurE/MurF N-terminal domain"/>
    <property type="match status" value="1"/>
</dbReference>
<reference key="1">
    <citation type="journal article" date="2000" name="Nature">
        <title>The genome sequence of the plant pathogen Xylella fastidiosa.</title>
        <authorList>
            <person name="Simpson A.J.G."/>
            <person name="Reinach F.C."/>
            <person name="Arruda P."/>
            <person name="Abreu F.A."/>
            <person name="Acencio M."/>
            <person name="Alvarenga R."/>
            <person name="Alves L.M.C."/>
            <person name="Araya J.E."/>
            <person name="Baia G.S."/>
            <person name="Baptista C.S."/>
            <person name="Barros M.H."/>
            <person name="Bonaccorsi E.D."/>
            <person name="Bordin S."/>
            <person name="Bove J.M."/>
            <person name="Briones M.R.S."/>
            <person name="Bueno M.R.P."/>
            <person name="Camargo A.A."/>
            <person name="Camargo L.E.A."/>
            <person name="Carraro D.M."/>
            <person name="Carrer H."/>
            <person name="Colauto N.B."/>
            <person name="Colombo C."/>
            <person name="Costa F.F."/>
            <person name="Costa M.C.R."/>
            <person name="Costa-Neto C.M."/>
            <person name="Coutinho L.L."/>
            <person name="Cristofani M."/>
            <person name="Dias-Neto E."/>
            <person name="Docena C."/>
            <person name="El-Dorry H."/>
            <person name="Facincani A.P."/>
            <person name="Ferreira A.J.S."/>
            <person name="Ferreira V.C.A."/>
            <person name="Ferro J.A."/>
            <person name="Fraga J.S."/>
            <person name="Franca S.C."/>
            <person name="Franco M.C."/>
            <person name="Frohme M."/>
            <person name="Furlan L.R."/>
            <person name="Garnier M."/>
            <person name="Goldman G.H."/>
            <person name="Goldman M.H.S."/>
            <person name="Gomes S.L."/>
            <person name="Gruber A."/>
            <person name="Ho P.L."/>
            <person name="Hoheisel J.D."/>
            <person name="Junqueira M.L."/>
            <person name="Kemper E.L."/>
            <person name="Kitajima J.P."/>
            <person name="Krieger J.E."/>
            <person name="Kuramae E.E."/>
            <person name="Laigret F."/>
            <person name="Lambais M.R."/>
            <person name="Leite L.C.C."/>
            <person name="Lemos E.G.M."/>
            <person name="Lemos M.V.F."/>
            <person name="Lopes S.A."/>
            <person name="Lopes C.R."/>
            <person name="Machado J.A."/>
            <person name="Machado M.A."/>
            <person name="Madeira A.M.B.N."/>
            <person name="Madeira H.M.F."/>
            <person name="Marino C.L."/>
            <person name="Marques M.V."/>
            <person name="Martins E.A.L."/>
            <person name="Martins E.M.F."/>
            <person name="Matsukuma A.Y."/>
            <person name="Menck C.F.M."/>
            <person name="Miracca E.C."/>
            <person name="Miyaki C.Y."/>
            <person name="Monteiro-Vitorello C.B."/>
            <person name="Moon D.H."/>
            <person name="Nagai M.A."/>
            <person name="Nascimento A.L.T.O."/>
            <person name="Netto L.E.S."/>
            <person name="Nhani A. Jr."/>
            <person name="Nobrega F.G."/>
            <person name="Nunes L.R."/>
            <person name="Oliveira M.A."/>
            <person name="de Oliveira M.C."/>
            <person name="de Oliveira R.C."/>
            <person name="Palmieri D.A."/>
            <person name="Paris A."/>
            <person name="Peixoto B.R."/>
            <person name="Pereira G.A.G."/>
            <person name="Pereira H.A. Jr."/>
            <person name="Pesquero J.B."/>
            <person name="Quaggio R.B."/>
            <person name="Roberto P.G."/>
            <person name="Rodrigues V."/>
            <person name="de Rosa A.J.M."/>
            <person name="de Rosa V.E. Jr."/>
            <person name="de Sa R.G."/>
            <person name="Santelli R.V."/>
            <person name="Sawasaki H.E."/>
            <person name="da Silva A.C.R."/>
            <person name="da Silva A.M."/>
            <person name="da Silva F.R."/>
            <person name="Silva W.A. Jr."/>
            <person name="da Silveira J.F."/>
            <person name="Silvestri M.L.Z."/>
            <person name="Siqueira W.J."/>
            <person name="de Souza A.A."/>
            <person name="de Souza A.P."/>
            <person name="Terenzi M.F."/>
            <person name="Truffi D."/>
            <person name="Tsai S.M."/>
            <person name="Tsuhako M.H."/>
            <person name="Vallada H."/>
            <person name="Van Sluys M.A."/>
            <person name="Verjovski-Almeida S."/>
            <person name="Vettore A.L."/>
            <person name="Zago M.A."/>
            <person name="Zatz M."/>
            <person name="Meidanis J."/>
            <person name="Setubal J.C."/>
        </authorList>
    </citation>
    <scope>NUCLEOTIDE SEQUENCE [LARGE SCALE GENOMIC DNA]</scope>
    <source>
        <strain>9a5c</strain>
    </source>
</reference>
<protein>
    <recommendedName>
        <fullName evidence="1">UDP-N-acetylmuramoyl-L-alanyl-D-glutamate--2,6-diaminopimelate ligase</fullName>
        <ecNumber evidence="1">6.3.2.13</ecNumber>
    </recommendedName>
    <alternativeName>
        <fullName evidence="1">Meso-A2pm-adding enzyme</fullName>
    </alternativeName>
    <alternativeName>
        <fullName evidence="1">Meso-diaminopimelate-adding enzyme</fullName>
    </alternativeName>
    <alternativeName>
        <fullName evidence="1">UDP-MurNAc-L-Ala-D-Glu:meso-diaminopimelate ligase</fullName>
    </alternativeName>
    <alternativeName>
        <fullName evidence="1">UDP-MurNAc-tripeptide synthetase</fullName>
    </alternativeName>
    <alternativeName>
        <fullName evidence="1">UDP-N-acetylmuramyl-tripeptide synthetase</fullName>
    </alternativeName>
</protein>
<organism>
    <name type="scientific">Xylella fastidiosa (strain 9a5c)</name>
    <dbReference type="NCBI Taxonomy" id="160492"/>
    <lineage>
        <taxon>Bacteria</taxon>
        <taxon>Pseudomonadati</taxon>
        <taxon>Pseudomonadota</taxon>
        <taxon>Gammaproteobacteria</taxon>
        <taxon>Lysobacterales</taxon>
        <taxon>Lysobacteraceae</taxon>
        <taxon>Xylella</taxon>
    </lineage>
</organism>
<gene>
    <name evidence="1" type="primary">murE</name>
    <name type="ordered locus">XF_0793</name>
</gene>
<keyword id="KW-0067">ATP-binding</keyword>
<keyword id="KW-0131">Cell cycle</keyword>
<keyword id="KW-0132">Cell division</keyword>
<keyword id="KW-0133">Cell shape</keyword>
<keyword id="KW-0961">Cell wall biogenesis/degradation</keyword>
<keyword id="KW-0963">Cytoplasm</keyword>
<keyword id="KW-0436">Ligase</keyword>
<keyword id="KW-0460">Magnesium</keyword>
<keyword id="KW-0547">Nucleotide-binding</keyword>
<keyword id="KW-0573">Peptidoglycan synthesis</keyword>
<name>MURE_XYLFA</name>
<comment type="function">
    <text evidence="1">Catalyzes the addition of meso-diaminopimelic acid to the nucleotide precursor UDP-N-acetylmuramoyl-L-alanyl-D-glutamate (UMAG) in the biosynthesis of bacterial cell-wall peptidoglycan.</text>
</comment>
<comment type="catalytic activity">
    <reaction evidence="1">
        <text>UDP-N-acetyl-alpha-D-muramoyl-L-alanyl-D-glutamate + meso-2,6-diaminopimelate + ATP = UDP-N-acetyl-alpha-D-muramoyl-L-alanyl-gamma-D-glutamyl-meso-2,6-diaminopimelate + ADP + phosphate + H(+)</text>
        <dbReference type="Rhea" id="RHEA:23676"/>
        <dbReference type="ChEBI" id="CHEBI:15378"/>
        <dbReference type="ChEBI" id="CHEBI:30616"/>
        <dbReference type="ChEBI" id="CHEBI:43474"/>
        <dbReference type="ChEBI" id="CHEBI:57791"/>
        <dbReference type="ChEBI" id="CHEBI:83900"/>
        <dbReference type="ChEBI" id="CHEBI:83905"/>
        <dbReference type="ChEBI" id="CHEBI:456216"/>
        <dbReference type="EC" id="6.3.2.13"/>
    </reaction>
</comment>
<comment type="cofactor">
    <cofactor evidence="1">
        <name>Mg(2+)</name>
        <dbReference type="ChEBI" id="CHEBI:18420"/>
    </cofactor>
</comment>
<comment type="pathway">
    <text evidence="1">Cell wall biogenesis; peptidoglycan biosynthesis.</text>
</comment>
<comment type="subcellular location">
    <subcellularLocation>
        <location evidence="1">Cytoplasm</location>
    </subcellularLocation>
</comment>
<comment type="PTM">
    <text evidence="1">Carboxylation is probably crucial for Mg(2+) binding and, consequently, for the gamma-phosphate positioning of ATP.</text>
</comment>
<comment type="similarity">
    <text evidence="1">Belongs to the MurCDEF family. MurE subfamily.</text>
</comment>
<proteinExistence type="inferred from homology"/>